<accession>Q3A8M6</accession>
<protein>
    <recommendedName>
        <fullName evidence="1">DNA replication and repair protein RecF</fullName>
    </recommendedName>
</protein>
<sequence length="363" mass="42013">MILTRIILHNYRNIEAAELCPEENFNLLCGDNAQGKTNTLEAIYLLGHFKSFRRGRNEELIGSADRHTRVQGEFLRDGLRETVSITITGDKKNIEINGKRPRQSNEMFGRFPSVLFAPEEVSLPKGFPAGRRALLDRALCQTRPSFLDHARAYQRCLRQRNILLKSGAAAPIVLPWTEELIQTGAMVRLARRRYLDRLLPLLRDIYREICSGRESVNLVYPSESDNLSDLKEELRSNLEREQSRETKYGMTMVGPHRDDPVFMVDDRVLGLYGSQGQQRSFILAFKTAQIIDLEKETGYTPLLLLDDMTSELDRKRQDYFFRFLHQRQGQVFITCTELSPLQNAGFNRMRTFRVREGKLCDYQ</sequence>
<reference key="1">
    <citation type="submission" date="2005-10" db="EMBL/GenBank/DDBJ databases">
        <title>Complete sequence of Pelobacter carbinolicus DSM 2380.</title>
        <authorList>
            <person name="Copeland A."/>
            <person name="Lucas S."/>
            <person name="Lapidus A."/>
            <person name="Barry K."/>
            <person name="Detter J.C."/>
            <person name="Glavina T."/>
            <person name="Hammon N."/>
            <person name="Israni S."/>
            <person name="Pitluck S."/>
            <person name="Chertkov O."/>
            <person name="Schmutz J."/>
            <person name="Larimer F."/>
            <person name="Land M."/>
            <person name="Kyrpides N."/>
            <person name="Ivanova N."/>
            <person name="Richardson P."/>
        </authorList>
    </citation>
    <scope>NUCLEOTIDE SEQUENCE [LARGE SCALE GENOMIC DNA]</scope>
    <source>
        <strain>DSM 2380 / NBRC 103641 / GraBd1</strain>
    </source>
</reference>
<comment type="function">
    <text evidence="1">The RecF protein is involved in DNA metabolism; it is required for DNA replication and normal SOS inducibility. RecF binds preferentially to single-stranded, linear DNA. It also seems to bind ATP.</text>
</comment>
<comment type="subcellular location">
    <subcellularLocation>
        <location evidence="1">Cytoplasm</location>
    </subcellularLocation>
</comment>
<comment type="similarity">
    <text evidence="1">Belongs to the RecF family.</text>
</comment>
<gene>
    <name evidence="1" type="primary">recF</name>
    <name type="ordered locus">Pcar_0003</name>
</gene>
<organism>
    <name type="scientific">Syntrophotalea carbinolica (strain DSM 2380 / NBRC 103641 / GraBd1)</name>
    <name type="common">Pelobacter carbinolicus</name>
    <dbReference type="NCBI Taxonomy" id="338963"/>
    <lineage>
        <taxon>Bacteria</taxon>
        <taxon>Pseudomonadati</taxon>
        <taxon>Thermodesulfobacteriota</taxon>
        <taxon>Desulfuromonadia</taxon>
        <taxon>Desulfuromonadales</taxon>
        <taxon>Syntrophotaleaceae</taxon>
        <taxon>Syntrophotalea</taxon>
    </lineage>
</organism>
<keyword id="KW-0067">ATP-binding</keyword>
<keyword id="KW-0963">Cytoplasm</keyword>
<keyword id="KW-0227">DNA damage</keyword>
<keyword id="KW-0234">DNA repair</keyword>
<keyword id="KW-0235">DNA replication</keyword>
<keyword id="KW-0238">DNA-binding</keyword>
<keyword id="KW-0547">Nucleotide-binding</keyword>
<keyword id="KW-1185">Reference proteome</keyword>
<keyword id="KW-0742">SOS response</keyword>
<evidence type="ECO:0000255" key="1">
    <source>
        <dbReference type="HAMAP-Rule" id="MF_00365"/>
    </source>
</evidence>
<name>RECF_SYNC1</name>
<dbReference type="EMBL" id="CP000142">
    <property type="protein sequence ID" value="ABA87266.1"/>
    <property type="molecule type" value="Genomic_DNA"/>
</dbReference>
<dbReference type="RefSeq" id="WP_011339648.1">
    <property type="nucleotide sequence ID" value="NC_007498.2"/>
</dbReference>
<dbReference type="SMR" id="Q3A8M6"/>
<dbReference type="STRING" id="338963.Pcar_0003"/>
<dbReference type="KEGG" id="pca:Pcar_0003"/>
<dbReference type="eggNOG" id="COG1195">
    <property type="taxonomic scope" value="Bacteria"/>
</dbReference>
<dbReference type="HOGENOM" id="CLU_040267_0_1_7"/>
<dbReference type="OrthoDB" id="9803889at2"/>
<dbReference type="Proteomes" id="UP000002534">
    <property type="component" value="Chromosome"/>
</dbReference>
<dbReference type="GO" id="GO:0005737">
    <property type="term" value="C:cytoplasm"/>
    <property type="evidence" value="ECO:0007669"/>
    <property type="project" value="UniProtKB-SubCell"/>
</dbReference>
<dbReference type="GO" id="GO:0005524">
    <property type="term" value="F:ATP binding"/>
    <property type="evidence" value="ECO:0007669"/>
    <property type="project" value="UniProtKB-UniRule"/>
</dbReference>
<dbReference type="GO" id="GO:0003697">
    <property type="term" value="F:single-stranded DNA binding"/>
    <property type="evidence" value="ECO:0007669"/>
    <property type="project" value="UniProtKB-UniRule"/>
</dbReference>
<dbReference type="GO" id="GO:0006260">
    <property type="term" value="P:DNA replication"/>
    <property type="evidence" value="ECO:0007669"/>
    <property type="project" value="UniProtKB-UniRule"/>
</dbReference>
<dbReference type="GO" id="GO:0000731">
    <property type="term" value="P:DNA synthesis involved in DNA repair"/>
    <property type="evidence" value="ECO:0007669"/>
    <property type="project" value="TreeGrafter"/>
</dbReference>
<dbReference type="GO" id="GO:0006302">
    <property type="term" value="P:double-strand break repair"/>
    <property type="evidence" value="ECO:0007669"/>
    <property type="project" value="TreeGrafter"/>
</dbReference>
<dbReference type="GO" id="GO:0009432">
    <property type="term" value="P:SOS response"/>
    <property type="evidence" value="ECO:0007669"/>
    <property type="project" value="UniProtKB-UniRule"/>
</dbReference>
<dbReference type="Gene3D" id="3.40.50.300">
    <property type="entry name" value="P-loop containing nucleotide triphosphate hydrolases"/>
    <property type="match status" value="1"/>
</dbReference>
<dbReference type="Gene3D" id="1.20.1050.90">
    <property type="entry name" value="RecF/RecN/SMC, N-terminal domain"/>
    <property type="match status" value="1"/>
</dbReference>
<dbReference type="HAMAP" id="MF_00365">
    <property type="entry name" value="RecF"/>
    <property type="match status" value="1"/>
</dbReference>
<dbReference type="InterPro" id="IPR001238">
    <property type="entry name" value="DNA-binding_RecF"/>
</dbReference>
<dbReference type="InterPro" id="IPR027417">
    <property type="entry name" value="P-loop_NTPase"/>
</dbReference>
<dbReference type="InterPro" id="IPR003395">
    <property type="entry name" value="RecF/RecN/SMC_N"/>
</dbReference>
<dbReference type="InterPro" id="IPR042174">
    <property type="entry name" value="RecF_2"/>
</dbReference>
<dbReference type="NCBIfam" id="TIGR00611">
    <property type="entry name" value="recf"/>
    <property type="match status" value="1"/>
</dbReference>
<dbReference type="PANTHER" id="PTHR32182">
    <property type="entry name" value="DNA REPLICATION AND REPAIR PROTEIN RECF"/>
    <property type="match status" value="1"/>
</dbReference>
<dbReference type="PANTHER" id="PTHR32182:SF0">
    <property type="entry name" value="DNA REPLICATION AND REPAIR PROTEIN RECF"/>
    <property type="match status" value="1"/>
</dbReference>
<dbReference type="Pfam" id="PF02463">
    <property type="entry name" value="SMC_N"/>
    <property type="match status" value="1"/>
</dbReference>
<dbReference type="SUPFAM" id="SSF52540">
    <property type="entry name" value="P-loop containing nucleoside triphosphate hydrolases"/>
    <property type="match status" value="1"/>
</dbReference>
<feature type="chain" id="PRO_0000236131" description="DNA replication and repair protein RecF">
    <location>
        <begin position="1"/>
        <end position="363"/>
    </location>
</feature>
<feature type="binding site" evidence="1">
    <location>
        <begin position="30"/>
        <end position="37"/>
    </location>
    <ligand>
        <name>ATP</name>
        <dbReference type="ChEBI" id="CHEBI:30616"/>
    </ligand>
</feature>
<proteinExistence type="inferred from homology"/>